<organism>
    <name type="scientific">Drosophila willistoni</name>
    <name type="common">Fruit fly</name>
    <dbReference type="NCBI Taxonomy" id="7260"/>
    <lineage>
        <taxon>Eukaryota</taxon>
        <taxon>Metazoa</taxon>
        <taxon>Ecdysozoa</taxon>
        <taxon>Arthropoda</taxon>
        <taxon>Hexapoda</taxon>
        <taxon>Insecta</taxon>
        <taxon>Pterygota</taxon>
        <taxon>Neoptera</taxon>
        <taxon>Endopterygota</taxon>
        <taxon>Diptera</taxon>
        <taxon>Brachycera</taxon>
        <taxon>Muscomorpha</taxon>
        <taxon>Ephydroidea</taxon>
        <taxon>Drosophilidae</taxon>
        <taxon>Drosophila</taxon>
        <taxon>Sophophora</taxon>
    </lineage>
</organism>
<proteinExistence type="inferred from homology"/>
<accession>B4MXW3</accession>
<comment type="function">
    <text evidence="1 2">Probable substrate-specific adapter of an E3 ubiquitin-protein ligase complex which mediates the ubiquitination and subsequent proteasomal degradation of target proteins. May have a role in synapse differentiation and growth (By similarity).</text>
</comment>
<comment type="pathway">
    <text evidence="2">Protein modification; protein ubiquitination.</text>
</comment>
<sequence>MGDLPGGGGGAAGGAGAAGGGGGGGNGAAGSSSSGGGASGSGGGGPGSSGLPTTNGLGVAGTAGPNVDRPPSPARLSHTSEKHPKVTLTELNMLRRHRELCDVVLNVGGRKIFAHRVILSACSSYFCAMFTGELEESRQTEVTIRDIDENAMELLIDFCYTAHIIVEESNVQTLLPAACLLQLVEIQDICCEFLKRQLDPTNCLGIRAFADTHSCRELLRIADKFTQHNFQEVMESEEFLLLPVSQLVDIICSDELNVRSEEQVFNAVMSWLKYNVAERRQHLAQVLQHVRLPLLSPKFLVGTVGSDLLVRSDEACRDLVDEAKNYLLLPQERPLMQGPRTRPRKPTRRGEVLFAVGGWCSGDAIASVERFDPQTNDWKMVAPMSKRRCGVGVAVLNDLLYAVGGHDGQSYLNSIERYDPQTNQWSCDVAPTTSCRTSVGVAVLDGFLYAVGGQDGVQCLNHVERYDPKDNKWGKVAPMTTRRLGVAVAVLGGYLYAIGGSDGQCPLNTVERYDPRQNKWVAVNPMSTRRKHLGCAVFNNYIYAVGGRDDCMELSSAERYNPLTNTWSPIVAMTSRRSGVGLAVVNGQLYAVGGFDGSAYLKTIEVYDPETNQWRLCGCMNYRRLGGGVGVMRAPQTENYMWCDNNSSNNNNNNYNLKHQQQQPQQQQQQQQQQTQQQL</sequence>
<evidence type="ECO:0000250" key="1">
    <source>
        <dbReference type="UniProtKB" id="Q9VUU5"/>
    </source>
</evidence>
<evidence type="ECO:0000250" key="2">
    <source>
        <dbReference type="UniProtKB" id="Q9Y2M5"/>
    </source>
</evidence>
<evidence type="ECO:0000255" key="3"/>
<evidence type="ECO:0000255" key="4">
    <source>
        <dbReference type="PROSITE-ProRule" id="PRU00037"/>
    </source>
</evidence>
<evidence type="ECO:0000256" key="5">
    <source>
        <dbReference type="SAM" id="MobiDB-lite"/>
    </source>
</evidence>
<evidence type="ECO:0000312" key="6">
    <source>
        <dbReference type="EMBL" id="EDW76882.1"/>
    </source>
</evidence>
<name>KLHDB_DROWI</name>
<keyword id="KW-0009">Actin-binding</keyword>
<keyword id="KW-0880">Kelch repeat</keyword>
<keyword id="KW-1185">Reference proteome</keyword>
<keyword id="KW-0677">Repeat</keyword>
<keyword id="KW-0833">Ubl conjugation pathway</keyword>
<feature type="chain" id="PRO_0000379955" description="Kelch-like protein diablo">
    <location>
        <begin position="1"/>
        <end position="679"/>
    </location>
</feature>
<feature type="domain" description="BTB" evidence="4">
    <location>
        <begin position="101"/>
        <end position="168"/>
    </location>
</feature>
<feature type="domain" description="BACK" evidence="3">
    <location>
        <begin position="203"/>
        <end position="305"/>
    </location>
</feature>
<feature type="repeat" description="Kelch 1" evidence="3">
    <location>
        <begin position="352"/>
        <end position="398"/>
    </location>
</feature>
<feature type="repeat" description="Kelch 2" evidence="3">
    <location>
        <begin position="400"/>
        <end position="446"/>
    </location>
</feature>
<feature type="repeat" description="Kelch 3" evidence="3">
    <location>
        <begin position="447"/>
        <end position="493"/>
    </location>
</feature>
<feature type="repeat" description="Kelch 4" evidence="3">
    <location>
        <begin position="495"/>
        <end position="540"/>
    </location>
</feature>
<feature type="repeat" description="Kelch 5" evidence="3">
    <location>
        <begin position="542"/>
        <end position="587"/>
    </location>
</feature>
<feature type="repeat" description="Kelch 6" evidence="3">
    <location>
        <begin position="588"/>
        <end position="634"/>
    </location>
</feature>
<feature type="region of interest" description="Disordered" evidence="5">
    <location>
        <begin position="1"/>
        <end position="84"/>
    </location>
</feature>
<feature type="region of interest" description="Disordered" evidence="5">
    <location>
        <begin position="643"/>
        <end position="679"/>
    </location>
</feature>
<feature type="compositionally biased region" description="Gly residues" evidence="5">
    <location>
        <begin position="1"/>
        <end position="48"/>
    </location>
</feature>
<feature type="compositionally biased region" description="Low complexity" evidence="5">
    <location>
        <begin position="645"/>
        <end position="679"/>
    </location>
</feature>
<reference evidence="6" key="1">
    <citation type="journal article" date="2007" name="Nature">
        <title>Evolution of genes and genomes on the Drosophila phylogeny.</title>
        <authorList>
            <consortium name="Drosophila 12 genomes consortium"/>
        </authorList>
    </citation>
    <scope>NUCLEOTIDE SEQUENCE [LARGE SCALE GENOMIC DNA]</scope>
    <source>
        <strain evidence="6">Tucson 14030-0811.24</strain>
    </source>
</reference>
<protein>
    <recommendedName>
        <fullName evidence="1">Kelch-like protein diablo</fullName>
    </recommendedName>
</protein>
<dbReference type="EMBL" id="CH963876">
    <property type="protein sequence ID" value="EDW76882.1"/>
    <property type="molecule type" value="Genomic_DNA"/>
</dbReference>
<dbReference type="RefSeq" id="XP_002065896.2">
    <property type="nucleotide sequence ID" value="XM_002065860.2"/>
</dbReference>
<dbReference type="SMR" id="B4MXW3"/>
<dbReference type="STRING" id="7260.B4MXW3"/>
<dbReference type="EnsemblMetazoa" id="FBtr0421713">
    <property type="protein sequence ID" value="FBpp0379805"/>
    <property type="gene ID" value="FBgn0217760"/>
</dbReference>
<dbReference type="EnsemblMetazoa" id="XM_023176084.2">
    <property type="protein sequence ID" value="XP_023031852.1"/>
    <property type="gene ID" value="LOC6643028"/>
</dbReference>
<dbReference type="eggNOG" id="KOG4441">
    <property type="taxonomic scope" value="Eukaryota"/>
</dbReference>
<dbReference type="HOGENOM" id="CLU_004253_12_0_1"/>
<dbReference type="OMA" id="CAVFNNL"/>
<dbReference type="OrthoDB" id="45365at2759"/>
<dbReference type="PhylomeDB" id="B4MXW3"/>
<dbReference type="UniPathway" id="UPA00143"/>
<dbReference type="Proteomes" id="UP000007798">
    <property type="component" value="Unassembled WGS sequence"/>
</dbReference>
<dbReference type="GO" id="GO:0003779">
    <property type="term" value="F:actin binding"/>
    <property type="evidence" value="ECO:0007669"/>
    <property type="project" value="UniProtKB-KW"/>
</dbReference>
<dbReference type="GO" id="GO:0045886">
    <property type="term" value="P:negative regulation of synaptic assembly at neuromuscular junction"/>
    <property type="evidence" value="ECO:0000250"/>
    <property type="project" value="UniProtKB"/>
</dbReference>
<dbReference type="GO" id="GO:0016567">
    <property type="term" value="P:protein ubiquitination"/>
    <property type="evidence" value="ECO:0007669"/>
    <property type="project" value="UniProtKB-UniPathway"/>
</dbReference>
<dbReference type="CDD" id="cd18459">
    <property type="entry name" value="BACK_KLHL20"/>
    <property type="match status" value="1"/>
</dbReference>
<dbReference type="CDD" id="cd18249">
    <property type="entry name" value="BTB_POZ_KLHL20_KLEIP"/>
    <property type="match status" value="1"/>
</dbReference>
<dbReference type="FunFam" id="1.25.40.420:FF:000001">
    <property type="entry name" value="Kelch-like family member 12"/>
    <property type="match status" value="1"/>
</dbReference>
<dbReference type="FunFam" id="2.120.10.80:FF:000006">
    <property type="entry name" value="Kelch-like family member 20"/>
    <property type="match status" value="1"/>
</dbReference>
<dbReference type="FunFam" id="3.30.710.10:FF:000001">
    <property type="entry name" value="Kelch-like family member 20"/>
    <property type="match status" value="1"/>
</dbReference>
<dbReference type="Gene3D" id="1.25.40.420">
    <property type="match status" value="1"/>
</dbReference>
<dbReference type="Gene3D" id="2.120.10.80">
    <property type="entry name" value="Kelch-type beta propeller"/>
    <property type="match status" value="1"/>
</dbReference>
<dbReference type="Gene3D" id="3.30.710.10">
    <property type="entry name" value="Potassium Channel Kv1.1, Chain A"/>
    <property type="match status" value="1"/>
</dbReference>
<dbReference type="InterPro" id="IPR011705">
    <property type="entry name" value="BACK"/>
</dbReference>
<dbReference type="InterPro" id="IPR017096">
    <property type="entry name" value="BTB-kelch_protein"/>
</dbReference>
<dbReference type="InterPro" id="IPR000210">
    <property type="entry name" value="BTB/POZ_dom"/>
</dbReference>
<dbReference type="InterPro" id="IPR011043">
    <property type="entry name" value="Gal_Oxase/kelch_b-propeller"/>
</dbReference>
<dbReference type="InterPro" id="IPR015915">
    <property type="entry name" value="Kelch-typ_b-propeller"/>
</dbReference>
<dbReference type="InterPro" id="IPR006652">
    <property type="entry name" value="Kelch_1"/>
</dbReference>
<dbReference type="InterPro" id="IPR011333">
    <property type="entry name" value="SKP1/BTB/POZ_sf"/>
</dbReference>
<dbReference type="PANTHER" id="PTHR24412">
    <property type="entry name" value="KELCH PROTEIN"/>
    <property type="match status" value="1"/>
</dbReference>
<dbReference type="PANTHER" id="PTHR24412:SF451">
    <property type="entry name" value="KELCH-LIKE PROTEIN 20"/>
    <property type="match status" value="1"/>
</dbReference>
<dbReference type="Pfam" id="PF07707">
    <property type="entry name" value="BACK"/>
    <property type="match status" value="1"/>
</dbReference>
<dbReference type="Pfam" id="PF00651">
    <property type="entry name" value="BTB"/>
    <property type="match status" value="1"/>
</dbReference>
<dbReference type="Pfam" id="PF01344">
    <property type="entry name" value="Kelch_1"/>
    <property type="match status" value="6"/>
</dbReference>
<dbReference type="PIRSF" id="PIRSF037037">
    <property type="entry name" value="Kelch-like_protein_gigaxonin"/>
    <property type="match status" value="1"/>
</dbReference>
<dbReference type="SMART" id="SM00875">
    <property type="entry name" value="BACK"/>
    <property type="match status" value="1"/>
</dbReference>
<dbReference type="SMART" id="SM00225">
    <property type="entry name" value="BTB"/>
    <property type="match status" value="1"/>
</dbReference>
<dbReference type="SMART" id="SM00612">
    <property type="entry name" value="Kelch"/>
    <property type="match status" value="6"/>
</dbReference>
<dbReference type="SUPFAM" id="SSF50965">
    <property type="entry name" value="Galactose oxidase, central domain"/>
    <property type="match status" value="1"/>
</dbReference>
<dbReference type="SUPFAM" id="SSF117281">
    <property type="entry name" value="Kelch motif"/>
    <property type="match status" value="1"/>
</dbReference>
<dbReference type="SUPFAM" id="SSF54695">
    <property type="entry name" value="POZ domain"/>
    <property type="match status" value="1"/>
</dbReference>
<dbReference type="PROSITE" id="PS50097">
    <property type="entry name" value="BTB"/>
    <property type="match status" value="1"/>
</dbReference>
<gene>
    <name evidence="1" type="primary">dbo</name>
    <name type="ORF">GK15757</name>
</gene>